<proteinExistence type="inferred from homology"/>
<keyword id="KW-0929">Antimicrobial</keyword>
<keyword id="KW-1015">Disulfide bond</keyword>
<keyword id="KW-0295">Fungicide</keyword>
<keyword id="KW-0611">Plant defense</keyword>
<keyword id="KW-1185">Reference proteome</keyword>
<keyword id="KW-0964">Secreted</keyword>
<keyword id="KW-0732">Signal</keyword>
<reference evidence="3" key="1">
    <citation type="journal article" date="2000" name="Nature">
        <title>Sequence and analysis of chromosome 1 of the plant Arabidopsis thaliana.</title>
        <authorList>
            <person name="Theologis A."/>
            <person name="Ecker J.R."/>
            <person name="Palm C.J."/>
            <person name="Federspiel N.A."/>
            <person name="Kaul S."/>
            <person name="White O."/>
            <person name="Alonso J."/>
            <person name="Altafi H."/>
            <person name="Araujo R."/>
            <person name="Bowman C.L."/>
            <person name="Brooks S.Y."/>
            <person name="Buehler E."/>
            <person name="Chan A."/>
            <person name="Chao Q."/>
            <person name="Chen H."/>
            <person name="Cheuk R.F."/>
            <person name="Chin C.W."/>
            <person name="Chung M.K."/>
            <person name="Conn L."/>
            <person name="Conway A.B."/>
            <person name="Conway A.R."/>
            <person name="Creasy T.H."/>
            <person name="Dewar K."/>
            <person name="Dunn P."/>
            <person name="Etgu P."/>
            <person name="Feldblyum T.V."/>
            <person name="Feng J.-D."/>
            <person name="Fong B."/>
            <person name="Fujii C.Y."/>
            <person name="Gill J.E."/>
            <person name="Goldsmith A.D."/>
            <person name="Haas B."/>
            <person name="Hansen N.F."/>
            <person name="Hughes B."/>
            <person name="Huizar L."/>
            <person name="Hunter J.L."/>
            <person name="Jenkins J."/>
            <person name="Johnson-Hopson C."/>
            <person name="Khan S."/>
            <person name="Khaykin E."/>
            <person name="Kim C.J."/>
            <person name="Koo H.L."/>
            <person name="Kremenetskaia I."/>
            <person name="Kurtz D.B."/>
            <person name="Kwan A."/>
            <person name="Lam B."/>
            <person name="Langin-Hooper S."/>
            <person name="Lee A."/>
            <person name="Lee J.M."/>
            <person name="Lenz C.A."/>
            <person name="Li J.H."/>
            <person name="Li Y.-P."/>
            <person name="Lin X."/>
            <person name="Liu S.X."/>
            <person name="Liu Z.A."/>
            <person name="Luros J.S."/>
            <person name="Maiti R."/>
            <person name="Marziali A."/>
            <person name="Militscher J."/>
            <person name="Miranda M."/>
            <person name="Nguyen M."/>
            <person name="Nierman W.C."/>
            <person name="Osborne B.I."/>
            <person name="Pai G."/>
            <person name="Peterson J."/>
            <person name="Pham P.K."/>
            <person name="Rizzo M."/>
            <person name="Rooney T."/>
            <person name="Rowley D."/>
            <person name="Sakano H."/>
            <person name="Salzberg S.L."/>
            <person name="Schwartz J.R."/>
            <person name="Shinn P."/>
            <person name="Southwick A.M."/>
            <person name="Sun H."/>
            <person name="Tallon L.J."/>
            <person name="Tambunga G."/>
            <person name="Toriumi M.J."/>
            <person name="Town C.D."/>
            <person name="Utterback T."/>
            <person name="Van Aken S."/>
            <person name="Vaysberg M."/>
            <person name="Vysotskaia V.S."/>
            <person name="Walker M."/>
            <person name="Wu D."/>
            <person name="Yu G."/>
            <person name="Fraser C.M."/>
            <person name="Venter J.C."/>
            <person name="Davis R.W."/>
        </authorList>
    </citation>
    <scope>NUCLEOTIDE SEQUENCE [LARGE SCALE GENOMIC DNA]</scope>
    <source>
        <strain>cv. Columbia</strain>
    </source>
</reference>
<reference key="2">
    <citation type="journal article" date="2017" name="Plant J.">
        <title>Araport11: a complete reannotation of the Arabidopsis thaliana reference genome.</title>
        <authorList>
            <person name="Cheng C.Y."/>
            <person name="Krishnakumar V."/>
            <person name="Chan A.P."/>
            <person name="Thibaud-Nissen F."/>
            <person name="Schobel S."/>
            <person name="Town C.D."/>
        </authorList>
    </citation>
    <scope>GENOME REANNOTATION</scope>
    <source>
        <strain>cv. Columbia</strain>
    </source>
</reference>
<reference evidence="3" key="3">
    <citation type="journal article" date="2001" name="Plant Mol. Biol.">
        <title>Two large Arabidopsis thaliana gene families are homologous to the Brassica gene superfamily that encodes pollen coat proteins and the male component of the self-incompatibility response.</title>
        <authorList>
            <person name="Vanoosthuyse V."/>
            <person name="Miege C."/>
            <person name="Dumas C."/>
            <person name="Cock J.M."/>
        </authorList>
    </citation>
    <scope>IDENTIFICATION</scope>
</reference>
<reference key="4">
    <citation type="journal article" date="2005" name="Plant Physiol.">
        <title>Genome organization of more than 300 defensin-like genes in Arabidopsis.</title>
        <authorList>
            <person name="Silverstein K.A.T."/>
            <person name="Graham M.A."/>
            <person name="Paape T.D."/>
            <person name="VandenBosch K.A."/>
        </authorList>
    </citation>
    <scope>GENE FAMILY</scope>
</reference>
<comment type="subcellular location">
    <subcellularLocation>
        <location evidence="1">Secreted</location>
    </subcellularLocation>
</comment>
<comment type="similarity">
    <text evidence="3">Belongs to the DEFL family.</text>
</comment>
<comment type="sequence caution" evidence="3">
    <conflict type="frameshift">
        <sequence resource="EMBL" id="AC007576"/>
    </conflict>
</comment>
<organism evidence="3">
    <name type="scientific">Arabidopsis thaliana</name>
    <name type="common">Mouse-ear cress</name>
    <dbReference type="NCBI Taxonomy" id="3702"/>
    <lineage>
        <taxon>Eukaryota</taxon>
        <taxon>Viridiplantae</taxon>
        <taxon>Streptophyta</taxon>
        <taxon>Embryophyta</taxon>
        <taxon>Tracheophyta</taxon>
        <taxon>Spermatophyta</taxon>
        <taxon>Magnoliopsida</taxon>
        <taxon>eudicotyledons</taxon>
        <taxon>Gunneridae</taxon>
        <taxon>Pentapetalae</taxon>
        <taxon>rosids</taxon>
        <taxon>malvids</taxon>
        <taxon>Brassicales</taxon>
        <taxon>Brassicaceae</taxon>
        <taxon>Camelineae</taxon>
        <taxon>Arabidopsis</taxon>
    </lineage>
</organism>
<accession>P82647</accession>
<gene>
    <name type="primary">SCRL28</name>
    <name type="ordered locus">At1g14182</name>
    <name type="ORF">F7A19</name>
</gene>
<protein>
    <recommendedName>
        <fullName>Putative defensin-like protein 227</fullName>
    </recommendedName>
    <alternativeName>
        <fullName>Putative S locus cysteine-rich-like protein 28</fullName>
        <shortName>Protein SCRL28</shortName>
        <shortName>SCR-like protein 28</shortName>
    </alternativeName>
</protein>
<evidence type="ECO:0000250" key="1"/>
<evidence type="ECO:0000255" key="2"/>
<evidence type="ECO:0000305" key="3"/>
<dbReference type="EMBL" id="AC007576">
    <property type="status" value="NOT_ANNOTATED_CDS"/>
    <property type="molecule type" value="Genomic_DNA"/>
</dbReference>
<dbReference type="EMBL" id="CP002684">
    <property type="status" value="NOT_ANNOTATED_CDS"/>
    <property type="molecule type" value="Genomic_DNA"/>
</dbReference>
<dbReference type="SMR" id="P82647"/>
<dbReference type="STRING" id="3702.P82647"/>
<dbReference type="Araport" id="AT1G14182"/>
<dbReference type="TAIR" id="AT1G14182"/>
<dbReference type="InParanoid" id="P82647"/>
<dbReference type="PRO" id="PR:P82647"/>
<dbReference type="Proteomes" id="UP000006548">
    <property type="component" value="Chromosome 1"/>
</dbReference>
<dbReference type="GO" id="GO:0005576">
    <property type="term" value="C:extracellular region"/>
    <property type="evidence" value="ECO:0007669"/>
    <property type="project" value="UniProtKB-SubCell"/>
</dbReference>
<dbReference type="GO" id="GO:0050832">
    <property type="term" value="P:defense response to fungus"/>
    <property type="evidence" value="ECO:0007669"/>
    <property type="project" value="UniProtKB-KW"/>
</dbReference>
<dbReference type="GO" id="GO:0031640">
    <property type="term" value="P:killing of cells of another organism"/>
    <property type="evidence" value="ECO:0007669"/>
    <property type="project" value="UniProtKB-KW"/>
</dbReference>
<dbReference type="GO" id="GO:0007165">
    <property type="term" value="P:signal transduction"/>
    <property type="evidence" value="ECO:0007669"/>
    <property type="project" value="InterPro"/>
</dbReference>
<dbReference type="InterPro" id="IPR010682">
    <property type="entry name" value="SCRL"/>
</dbReference>
<dbReference type="PANTHER" id="PTHR34450:SF4">
    <property type="entry name" value="DEFENSIN-LIKE PROTEIN 226-RELATED"/>
    <property type="match status" value="1"/>
</dbReference>
<dbReference type="PANTHER" id="PTHR34450">
    <property type="entry name" value="DEFENSIN-LIKE PROTEIN 245-RELATED"/>
    <property type="match status" value="1"/>
</dbReference>
<dbReference type="Pfam" id="PF06876">
    <property type="entry name" value="SCRL"/>
    <property type="match status" value="1"/>
</dbReference>
<sequence>MKWATLFMVSCVLMFFVMNNINEVESIHVEQAGVCEFTGEFPGKCGNNGRKMCVEAMNKKNKGSPGENKKNLRCECFDNPVVILGRPKRICRCRNNC</sequence>
<name>DF227_ARATH</name>
<feature type="signal peptide" evidence="2">
    <location>
        <begin position="1"/>
        <end position="26"/>
    </location>
</feature>
<feature type="chain" id="PRO_0000031954" description="Putative defensin-like protein 227">
    <location>
        <begin position="27"/>
        <end position="97"/>
    </location>
</feature>
<feature type="disulfide bond" evidence="1">
    <location>
        <begin position="35"/>
        <end position="97"/>
    </location>
</feature>
<feature type="disulfide bond" evidence="1">
    <location>
        <begin position="45"/>
        <end position="76"/>
    </location>
</feature>
<feature type="disulfide bond" evidence="1">
    <location>
        <begin position="53"/>
        <end position="91"/>
    </location>
</feature>
<feature type="disulfide bond" evidence="1">
    <location>
        <begin position="74"/>
        <end position="93"/>
    </location>
</feature>